<comment type="function">
    <text evidence="1 4 5 9">Unsaturated beta-glucuronyl hydrolase involved in ulvan degradation (PubMed:31285597, Ref.2). Ulvan is the main polysaccharide component of the Ulvales (green seaweed) cell wall. It is composed of disaccharide building blocks comprising 3-sulfated rhamnose (Rha3S) linked to D-glucuronic acid (GlcA), L-iduronic acid (IduA), or D-xylose (Xyl) (Probable). Unsaturated 3S-rhamnoglycuronyl hydrolase works together with ulvan lyases to fully degrade the ulvan polymer, catalyzing specifically the cleavage of the unsaturated 4-deoxy-L-threo-hex-4-enopyranosiduronic acid (deltaUA) of deltaUA-Rha3S disaccharides and deltaUA-Rha3S-Xyl-Rha3S tetrasaccharides, the end products of the ulvan lyase reaction. Also hydrolases deltaUA-Rha3S-IduA-Rha3S and deltaUA-Rha3S-GlcA-Rha3S tetrasaccharidestetrasaccharides. Prefers tetrasaccharides over disaccharides and prefers an uronic residue at subsite +2 (By similarity).</text>
</comment>
<comment type="subcellular location">
    <subcellularLocation>
        <location evidence="4">Periplasm</location>
    </subcellularLocation>
</comment>
<comment type="induction">
    <text evidence="4">By ulvan and rhamnose.</text>
</comment>
<comment type="similarity">
    <text evidence="8">Belongs to the glycosyl hydrolase 105 family.</text>
</comment>
<organism>
    <name type="scientific">Formosa agariphila (strain DSM 15362 / KCTC 12365 / LMG 23005 / KMM 3901 / M-2Alg 35-1)</name>
    <dbReference type="NCBI Taxonomy" id="1347342"/>
    <lineage>
        <taxon>Bacteria</taxon>
        <taxon>Pseudomonadati</taxon>
        <taxon>Bacteroidota</taxon>
        <taxon>Flavobacteriia</taxon>
        <taxon>Flavobacteriales</taxon>
        <taxon>Flavobacteriaceae</taxon>
        <taxon>Formosa</taxon>
    </lineage>
</organism>
<proteinExistence type="evidence at transcript level"/>
<accession>T2KPL9</accession>
<gene>
    <name evidence="10" type="ORF">BN863_22220</name>
</gene>
<reference key="1">
    <citation type="journal article" date="2013" name="Appl. Environ. Microbiol.">
        <title>The genome of the alga-associated marine flavobacterium Formosa agariphila KMM 3901T reveals a broad potential for degradation of algal polysaccharides.</title>
        <authorList>
            <person name="Mann A.J."/>
            <person name="Hahnke R.L."/>
            <person name="Huang S."/>
            <person name="Werner J."/>
            <person name="Xing P."/>
            <person name="Barbeyron T."/>
            <person name="Huettel B."/>
            <person name="Stueber K."/>
            <person name="Reinhardt R."/>
            <person name="Harder J."/>
            <person name="Gloeckner F.O."/>
            <person name="Amann R.I."/>
            <person name="Teeling H."/>
        </authorList>
    </citation>
    <scope>NUCLEOTIDE SEQUENCE [LARGE SCALE GENOMIC DNA]</scope>
    <source>
        <strain>DSM 15362 / KCTC 12365 / LMG 23005 / KMM 3901 / M-2Alg 35-1</strain>
    </source>
</reference>
<reference key="2">
    <citation type="journal article" date="2017" name="Algal Res.">
        <title>The enzymatic ulvan depolymerisation system from the alga-associated marine flavobacterium Formosa agariphila.</title>
        <authorList>
            <person name="Salinas A."/>
            <person name="French C.E."/>
        </authorList>
    </citation>
    <scope>FUNCTION</scope>
</reference>
<reference key="3">
    <citation type="journal article" date="2019" name="Nat. Chem. Biol.">
        <title>A marine bacterial enzymatic cascade degrades the algal polysaccharide ulvan.</title>
        <authorList>
            <person name="Reisky L."/>
            <person name="Prechoux A."/>
            <person name="Zuehlke M.K."/>
            <person name="Baeumgen M."/>
            <person name="Robb C.S."/>
            <person name="Gerlach N."/>
            <person name="Roret T."/>
            <person name="Stanetty C."/>
            <person name="Larocque R."/>
            <person name="Michel G."/>
            <person name="Song T."/>
            <person name="Markert S."/>
            <person name="Unfried F."/>
            <person name="Mihovilovic M.D."/>
            <person name="Trautwein-Schult A."/>
            <person name="Becher D."/>
            <person name="Schweder T."/>
            <person name="Bornscheuer U.T."/>
            <person name="Hehemann J.H."/>
        </authorList>
    </citation>
    <scope>FUNCTION</scope>
    <scope>SUBCELLULAR LOCATION</scope>
    <scope>INDUCTION</scope>
</reference>
<sequence length="377" mass="43457">MKNQALKILTLCVLVGSAMSLKLYAQKGLNHSEIEAKMIKALEWQEAHPIFALAPTDWTEGAYYIGVSRAHKTTQDMMYMAALKNQAYWNNWQTYSRLHHADDVAISYSYIYIGMNDKRPGFVNLEPTKKFLDAHLHEDDEWKAGTDKSASGKTILWWWCDALFMAPPVLNLYAKHTNQPKYRDEMHKYYMETYNQLYDKEERLFARDMRFVWKGTEKDLKEPNDKKIFWSRGNGWVLGGLALLLDDMPNDYKHRTFYENLFKDMASRILELQPKDGLWRTSLLSPETYDHGEVSGSGFYTFALAWGVNNGLLDRNKYEPAVKKAWKALADCQHEDGRVGWVQNIGASPEPASADSWQNFGTGAFLMAGSEVLKLEE</sequence>
<protein>
    <recommendedName>
        <fullName evidence="8">Unsaturated 3S-rhamnoglycuronyl hydrolase</fullName>
        <ecNumber evidence="1">3.2.1.-</ecNumber>
    </recommendedName>
    <alternativeName>
        <fullName evidence="8">Glycosyl hydrolase 105 family protein P33</fullName>
        <shortName evidence="6">P33_GH105</shortName>
    </alternativeName>
    <alternativeName>
        <fullName evidence="6">Polysaccharide utilization locus H protein P33</fullName>
        <shortName>PUL H protein P33</shortName>
    </alternativeName>
    <alternativeName>
        <fullName>Ulvan hydrolase</fullName>
    </alternativeName>
    <alternativeName>
        <fullName evidence="7">Unsaturated beta-glucuronyl hydrolase</fullName>
        <shortName>UGL</shortName>
    </alternativeName>
</protein>
<dbReference type="EC" id="3.2.1.-" evidence="1"/>
<dbReference type="EMBL" id="HG315671">
    <property type="protein sequence ID" value="CDF79934.1"/>
    <property type="molecule type" value="Genomic_DNA"/>
</dbReference>
<dbReference type="RefSeq" id="WP_038530539.1">
    <property type="nucleotide sequence ID" value="NZ_HG315671.1"/>
</dbReference>
<dbReference type="SMR" id="T2KPL9"/>
<dbReference type="STRING" id="1347342.BN863_22220"/>
<dbReference type="PATRIC" id="fig|1347342.6.peg.2229"/>
<dbReference type="eggNOG" id="COG4225">
    <property type="taxonomic scope" value="Bacteria"/>
</dbReference>
<dbReference type="HOGENOM" id="CLU_042785_0_0_10"/>
<dbReference type="OrthoDB" id="258246at2"/>
<dbReference type="Proteomes" id="UP000016160">
    <property type="component" value="Chromosome"/>
</dbReference>
<dbReference type="GO" id="GO:0042597">
    <property type="term" value="C:periplasmic space"/>
    <property type="evidence" value="ECO:0007669"/>
    <property type="project" value="UniProtKB-SubCell"/>
</dbReference>
<dbReference type="GO" id="GO:0016787">
    <property type="term" value="F:hydrolase activity"/>
    <property type="evidence" value="ECO:0007669"/>
    <property type="project" value="UniProtKB-KW"/>
</dbReference>
<dbReference type="GO" id="GO:0005975">
    <property type="term" value="P:carbohydrate metabolic process"/>
    <property type="evidence" value="ECO:0007669"/>
    <property type="project" value="InterPro"/>
</dbReference>
<dbReference type="Gene3D" id="1.50.10.10">
    <property type="match status" value="1"/>
</dbReference>
<dbReference type="InterPro" id="IPR008928">
    <property type="entry name" value="6-hairpin_glycosidase_sf"/>
</dbReference>
<dbReference type="InterPro" id="IPR012341">
    <property type="entry name" value="6hp_glycosidase-like_sf"/>
</dbReference>
<dbReference type="InterPro" id="IPR010905">
    <property type="entry name" value="Glyco_hydro_88"/>
</dbReference>
<dbReference type="InterPro" id="IPR052043">
    <property type="entry name" value="PolySaccharide_Degr_Enz"/>
</dbReference>
<dbReference type="PANTHER" id="PTHR33886">
    <property type="entry name" value="UNSATURATED RHAMNOGALACTURONAN HYDROLASE (EUROFUNG)"/>
    <property type="match status" value="1"/>
</dbReference>
<dbReference type="PANTHER" id="PTHR33886:SF8">
    <property type="entry name" value="UNSATURATED RHAMNOGALACTURONAN HYDROLASE (EUROFUNG)"/>
    <property type="match status" value="1"/>
</dbReference>
<dbReference type="Pfam" id="PF07470">
    <property type="entry name" value="Glyco_hydro_88"/>
    <property type="match status" value="1"/>
</dbReference>
<dbReference type="SUPFAM" id="SSF48208">
    <property type="entry name" value="Six-hairpin glycosidases"/>
    <property type="match status" value="1"/>
</dbReference>
<name>PLH33_FORAG</name>
<keyword id="KW-0378">Hydrolase</keyword>
<keyword id="KW-0574">Periplasm</keyword>
<keyword id="KW-1185">Reference proteome</keyword>
<keyword id="KW-0732">Signal</keyword>
<feature type="signal peptide" evidence="3">
    <location>
        <begin position="1"/>
        <end position="25"/>
    </location>
</feature>
<feature type="chain" id="PRO_5004602909" description="Unsaturated 3S-rhamnoglycuronyl hydrolase">
    <location>
        <begin position="26"/>
        <end position="377"/>
    </location>
</feature>
<feature type="active site" description="Proton donor" evidence="2">
    <location>
        <position position="161"/>
    </location>
</feature>
<evidence type="ECO:0000250" key="1">
    <source>
        <dbReference type="UniProtKB" id="L7P9J4"/>
    </source>
</evidence>
<evidence type="ECO:0000250" key="2">
    <source>
        <dbReference type="UniProtKB" id="O34559"/>
    </source>
</evidence>
<evidence type="ECO:0000255" key="3"/>
<evidence type="ECO:0000269" key="4">
    <source>
    </source>
</evidence>
<evidence type="ECO:0000269" key="5">
    <source ref="2"/>
</evidence>
<evidence type="ECO:0000303" key="6">
    <source>
    </source>
</evidence>
<evidence type="ECO:0000303" key="7">
    <source ref="2"/>
</evidence>
<evidence type="ECO:0000305" key="8"/>
<evidence type="ECO:0000305" key="9">
    <source ref="2"/>
</evidence>
<evidence type="ECO:0000312" key="10">
    <source>
        <dbReference type="EMBL" id="CDF79934.1"/>
    </source>
</evidence>